<dbReference type="EC" id="1.14.99.60" evidence="1"/>
<dbReference type="EMBL" id="CP000890">
    <property type="protein sequence ID" value="ABX78202.1"/>
    <property type="molecule type" value="Genomic_DNA"/>
</dbReference>
<dbReference type="RefSeq" id="WP_010958504.1">
    <property type="nucleotide sequence ID" value="NC_010117.1"/>
</dbReference>
<dbReference type="SMR" id="A9NAW1"/>
<dbReference type="KEGG" id="cbs:COXBURSA331_A2073"/>
<dbReference type="HOGENOM" id="CLU_088601_0_0_6"/>
<dbReference type="UniPathway" id="UPA00232"/>
<dbReference type="GO" id="GO:0005886">
    <property type="term" value="C:plasma membrane"/>
    <property type="evidence" value="ECO:0007669"/>
    <property type="project" value="UniProtKB-SubCell"/>
</dbReference>
<dbReference type="GO" id="GO:0008682">
    <property type="term" value="F:3-demethoxyubiquinol 3-hydroxylase activity"/>
    <property type="evidence" value="ECO:0007669"/>
    <property type="project" value="UniProtKB-EC"/>
</dbReference>
<dbReference type="GO" id="GO:0046872">
    <property type="term" value="F:metal ion binding"/>
    <property type="evidence" value="ECO:0007669"/>
    <property type="project" value="UniProtKB-KW"/>
</dbReference>
<dbReference type="GO" id="GO:0006744">
    <property type="term" value="P:ubiquinone biosynthetic process"/>
    <property type="evidence" value="ECO:0007669"/>
    <property type="project" value="UniProtKB-UniRule"/>
</dbReference>
<dbReference type="CDD" id="cd01042">
    <property type="entry name" value="DMQH"/>
    <property type="match status" value="1"/>
</dbReference>
<dbReference type="Gene3D" id="1.20.1260.10">
    <property type="match status" value="1"/>
</dbReference>
<dbReference type="HAMAP" id="MF_01658">
    <property type="entry name" value="COQ7"/>
    <property type="match status" value="1"/>
</dbReference>
<dbReference type="InterPro" id="IPR047809">
    <property type="entry name" value="COQ7_proteobact"/>
</dbReference>
<dbReference type="InterPro" id="IPR012347">
    <property type="entry name" value="Ferritin-like"/>
</dbReference>
<dbReference type="InterPro" id="IPR009078">
    <property type="entry name" value="Ferritin-like_SF"/>
</dbReference>
<dbReference type="InterPro" id="IPR011566">
    <property type="entry name" value="Ubq_synth_Coq7"/>
</dbReference>
<dbReference type="NCBIfam" id="NF033656">
    <property type="entry name" value="DMQ_monoox_COQ7"/>
    <property type="match status" value="1"/>
</dbReference>
<dbReference type="PANTHER" id="PTHR11237:SF4">
    <property type="entry name" value="5-DEMETHOXYUBIQUINONE HYDROXYLASE, MITOCHONDRIAL"/>
    <property type="match status" value="1"/>
</dbReference>
<dbReference type="PANTHER" id="PTHR11237">
    <property type="entry name" value="COENZYME Q10 BIOSYNTHESIS PROTEIN 7"/>
    <property type="match status" value="1"/>
</dbReference>
<dbReference type="Pfam" id="PF03232">
    <property type="entry name" value="COQ7"/>
    <property type="match status" value="1"/>
</dbReference>
<dbReference type="SUPFAM" id="SSF47240">
    <property type="entry name" value="Ferritin-like"/>
    <property type="match status" value="1"/>
</dbReference>
<feature type="chain" id="PRO_0000338682" description="3-demethoxyubiquinol 3-hydroxylase">
    <location>
        <begin position="1"/>
        <end position="215"/>
    </location>
</feature>
<feature type="binding site" evidence="1">
    <location>
        <position position="64"/>
    </location>
    <ligand>
        <name>Fe cation</name>
        <dbReference type="ChEBI" id="CHEBI:24875"/>
        <label>1</label>
    </ligand>
</feature>
<feature type="binding site" evidence="1">
    <location>
        <position position="94"/>
    </location>
    <ligand>
        <name>Fe cation</name>
        <dbReference type="ChEBI" id="CHEBI:24875"/>
        <label>1</label>
    </ligand>
</feature>
<feature type="binding site" evidence="1">
    <location>
        <position position="94"/>
    </location>
    <ligand>
        <name>Fe cation</name>
        <dbReference type="ChEBI" id="CHEBI:24875"/>
        <label>2</label>
    </ligand>
</feature>
<feature type="binding site" evidence="1">
    <location>
        <position position="97"/>
    </location>
    <ligand>
        <name>Fe cation</name>
        <dbReference type="ChEBI" id="CHEBI:24875"/>
        <label>1</label>
    </ligand>
</feature>
<feature type="binding site" evidence="1">
    <location>
        <position position="146"/>
    </location>
    <ligand>
        <name>Fe cation</name>
        <dbReference type="ChEBI" id="CHEBI:24875"/>
        <label>2</label>
    </ligand>
</feature>
<feature type="binding site" evidence="1">
    <location>
        <position position="178"/>
    </location>
    <ligand>
        <name>Fe cation</name>
        <dbReference type="ChEBI" id="CHEBI:24875"/>
        <label>1</label>
    </ligand>
</feature>
<feature type="binding site" evidence="1">
    <location>
        <position position="178"/>
    </location>
    <ligand>
        <name>Fe cation</name>
        <dbReference type="ChEBI" id="CHEBI:24875"/>
        <label>2</label>
    </ligand>
</feature>
<feature type="binding site" evidence="1">
    <location>
        <position position="181"/>
    </location>
    <ligand>
        <name>Fe cation</name>
        <dbReference type="ChEBI" id="CHEBI:24875"/>
        <label>2</label>
    </ligand>
</feature>
<proteinExistence type="inferred from homology"/>
<comment type="function">
    <text evidence="1">Catalyzes the hydroxylation of 2-nonaprenyl-3-methyl-6-methoxy-1,4-benzoquinol during ubiquinone biosynthesis.</text>
</comment>
<comment type="catalytic activity">
    <reaction evidence="1">
        <text>a 5-methoxy-2-methyl-3-(all-trans-polyprenyl)benzene-1,4-diol + AH2 + O2 = a 3-demethylubiquinol + A + H2O</text>
        <dbReference type="Rhea" id="RHEA:50908"/>
        <dbReference type="Rhea" id="RHEA-COMP:10859"/>
        <dbReference type="Rhea" id="RHEA-COMP:10914"/>
        <dbReference type="ChEBI" id="CHEBI:13193"/>
        <dbReference type="ChEBI" id="CHEBI:15377"/>
        <dbReference type="ChEBI" id="CHEBI:15379"/>
        <dbReference type="ChEBI" id="CHEBI:17499"/>
        <dbReference type="ChEBI" id="CHEBI:84167"/>
        <dbReference type="ChEBI" id="CHEBI:84422"/>
        <dbReference type="EC" id="1.14.99.60"/>
    </reaction>
</comment>
<comment type="cofactor">
    <cofactor evidence="1">
        <name>Fe cation</name>
        <dbReference type="ChEBI" id="CHEBI:24875"/>
    </cofactor>
    <text evidence="1">Binds 2 iron ions per subunit.</text>
</comment>
<comment type="pathway">
    <text evidence="1">Cofactor biosynthesis; ubiquinone biosynthesis.</text>
</comment>
<comment type="subcellular location">
    <subcellularLocation>
        <location evidence="1">Cell membrane</location>
        <topology evidence="1">Peripheral membrane protein</topology>
    </subcellularLocation>
</comment>
<comment type="similarity">
    <text evidence="1">Belongs to the COQ7 family.</text>
</comment>
<accession>A9NAW1</accession>
<organism>
    <name type="scientific">Coxiella burnetii (strain RSA 331 / Henzerling II)</name>
    <dbReference type="NCBI Taxonomy" id="360115"/>
    <lineage>
        <taxon>Bacteria</taxon>
        <taxon>Pseudomonadati</taxon>
        <taxon>Pseudomonadota</taxon>
        <taxon>Gammaproteobacteria</taxon>
        <taxon>Legionellales</taxon>
        <taxon>Coxiellaceae</taxon>
        <taxon>Coxiella</taxon>
    </lineage>
</organism>
<sequence>MSNNSRHYSAIDEAILQGQAMLETLFGKPVAQRENPAKGLSQPALTSAEKKQSIGFMRVNHSGEVCAQALYHGQMATAKNPAVRALFTTAAKEETDHLAWCQERLEELGGHTSYLNAFWYTNSFLIGLLAGLSGDPLSLGFVEETEKQVEIHLADHLRKIPSNDLKSRKIVEYMQQDEIQHGLNARSSGAKELPYLVKKLMAFQAKVMTTLAYWI</sequence>
<reference key="1">
    <citation type="submission" date="2007-11" db="EMBL/GenBank/DDBJ databases">
        <title>Genome sequencing of phylogenetically and phenotypically diverse Coxiella burnetii isolates.</title>
        <authorList>
            <person name="Seshadri R."/>
            <person name="Samuel J.E."/>
        </authorList>
    </citation>
    <scope>NUCLEOTIDE SEQUENCE [LARGE SCALE GENOMIC DNA]</scope>
    <source>
        <strain>RSA 331 / Henzerling II</strain>
    </source>
</reference>
<name>COQ7_COXBR</name>
<keyword id="KW-1003">Cell membrane</keyword>
<keyword id="KW-0408">Iron</keyword>
<keyword id="KW-0472">Membrane</keyword>
<keyword id="KW-0479">Metal-binding</keyword>
<keyword id="KW-0503">Monooxygenase</keyword>
<keyword id="KW-0560">Oxidoreductase</keyword>
<keyword id="KW-0831">Ubiquinone biosynthesis</keyword>
<evidence type="ECO:0000255" key="1">
    <source>
        <dbReference type="HAMAP-Rule" id="MF_01658"/>
    </source>
</evidence>
<protein>
    <recommendedName>
        <fullName evidence="1">3-demethoxyubiquinol 3-hydroxylase</fullName>
        <shortName evidence="1">DMQ hydroxylase</shortName>
        <ecNumber evidence="1">1.14.99.60</ecNumber>
    </recommendedName>
    <alternativeName>
        <fullName evidence="1">2-nonaprenyl-3-methyl-6-methoxy-1,4-benzoquinol hydroxylase</fullName>
    </alternativeName>
</protein>
<gene>
    <name evidence="1" type="primary">coq7</name>
    <name type="ordered locus">COXBURSA331_A2073</name>
</gene>